<feature type="signal peptide" evidence="2">
    <location>
        <begin position="1"/>
        <end position="21"/>
    </location>
</feature>
<feature type="chain" id="PRO_0000424855" description="Glucan 1,3-beta-glucosidase 2">
    <location>
        <begin position="22"/>
        <end position="456"/>
    </location>
</feature>
<feature type="propeptide" id="PRO_0000424856" description="Removed in mature form" evidence="2">
    <location>
        <begin position="457"/>
        <end position="479"/>
    </location>
</feature>
<feature type="active site" description="Proton donor" evidence="1">
    <location>
        <position position="227"/>
    </location>
</feature>
<feature type="active site" description="Nucleophile" evidence="1">
    <location>
        <position position="306"/>
    </location>
</feature>
<feature type="lipid moiety-binding region" description="GPI-anchor amidated serine" evidence="2">
    <location>
        <position position="456"/>
    </location>
</feature>
<feature type="glycosylation site" description="N-linked (GlcNAc...) asparagine" evidence="2">
    <location>
        <position position="25"/>
    </location>
</feature>
<feature type="glycosylation site" description="N-linked (GlcNAc...) asparagine" evidence="2">
    <location>
        <position position="29"/>
    </location>
</feature>
<feature type="glycosylation site" description="N-linked (GlcNAc...) asparagine" evidence="2">
    <location>
        <position position="63"/>
    </location>
</feature>
<feature type="glycosylation site" description="N-linked (GlcNAc...) asparagine" evidence="2">
    <location>
        <position position="104"/>
    </location>
</feature>
<feature type="glycosylation site" description="N-linked (GlcNAc...) asparagine" evidence="2">
    <location>
        <position position="187"/>
    </location>
</feature>
<feature type="glycosylation site" description="N-linked (GlcNAc...) asparagine" evidence="2">
    <location>
        <position position="193"/>
    </location>
</feature>
<feature type="glycosylation site" description="N-linked (GlcNAc...) asparagine" evidence="2">
    <location>
        <position position="254"/>
    </location>
</feature>
<feature type="glycosylation site" description="N-linked (GlcNAc...) asparagine" evidence="2">
    <location>
        <position position="285"/>
    </location>
</feature>
<feature type="glycosylation site" description="N-linked (GlcNAc...) asparagine" evidence="2">
    <location>
        <position position="288"/>
    </location>
</feature>
<feature type="glycosylation site" description="N-linked (GlcNAc...) asparagine" evidence="2">
    <location>
        <position position="318"/>
    </location>
</feature>
<feature type="glycosylation site" description="N-linked (GlcNAc...) asparagine" evidence="2">
    <location>
        <position position="451"/>
    </location>
</feature>
<sequence length="479" mass="54534">MMLFLIHLMALCCMFVAEVACEQFNSTSNSSSAQSSLIDFQYKGVSIGGWLVLEPYITPSLFNATLSSGETWTDLPVDEYHFCEKLGAKEAEKRLTDHWESMYNETDFKQIKEAGLNMVRIPIGYWSFEKLEGDPYVSGAQDYLDKAIEWSHANDLKVMIDLHGAPNTQNGFDNSGLRNLGYPGWQNKTEYVNHTYKVLQQMFQKYGTGKYASDYKNTIIGIEVLNEPLNPNMDKLKEFYIESYNDGREIQVINNTIFFQEAFQPIGYWDSFLEKGEIKVTETSNGTNHTTTKKADFKNIIIDHHHYEVFTESQVASNVSTHLENIKNYASAIGKEKAKAIVGEWSAALTDCAPWLNGVGLGSRYEGTAPYTNDRVGSCAEFNKSPDKWSKKQKKDYRRFVEMQLYEYSTNSQGWIFWCWKTEGATEWDFRALVKNGIMPQPLDNYKYVKNGTDTSSASAIASNKMTLLLAFLLVILVI</sequence>
<name>EXG2_CANAL</name>
<reference key="1">
    <citation type="journal article" date="2004" name="Proc. Natl. Acad. Sci. U.S.A.">
        <title>The diploid genome sequence of Candida albicans.</title>
        <authorList>
            <person name="Jones T."/>
            <person name="Federspiel N.A."/>
            <person name="Chibana H."/>
            <person name="Dungan J."/>
            <person name="Kalman S."/>
            <person name="Magee B.B."/>
            <person name="Newport G."/>
            <person name="Thorstenson Y.R."/>
            <person name="Agabian N."/>
            <person name="Magee P.T."/>
            <person name="Davis R.W."/>
            <person name="Scherer S."/>
        </authorList>
    </citation>
    <scope>NUCLEOTIDE SEQUENCE [LARGE SCALE GENOMIC DNA]</scope>
    <source>
        <strain>SC5314 / ATCC MYA-2876</strain>
    </source>
</reference>
<reference key="2">
    <citation type="journal article" date="2007" name="Genome Biol.">
        <title>Assembly of the Candida albicans genome into sixteen supercontigs aligned on the eight chromosomes.</title>
        <authorList>
            <person name="van het Hoog M."/>
            <person name="Rast T.J."/>
            <person name="Martchenko M."/>
            <person name="Grindle S."/>
            <person name="Dignard D."/>
            <person name="Hogues H."/>
            <person name="Cuomo C."/>
            <person name="Berriman M."/>
            <person name="Scherer S."/>
            <person name="Magee B.B."/>
            <person name="Whiteway M."/>
            <person name="Chibana H."/>
            <person name="Nantel A."/>
            <person name="Magee P.T."/>
        </authorList>
    </citation>
    <scope>GENOME REANNOTATION</scope>
    <source>
        <strain>SC5314 / ATCC MYA-2876</strain>
    </source>
</reference>
<reference key="3">
    <citation type="journal article" date="2013" name="Genome Biol.">
        <title>Assembly of a phased diploid Candida albicans genome facilitates allele-specific measurements and provides a simple model for repeat and indel structure.</title>
        <authorList>
            <person name="Muzzey D."/>
            <person name="Schwartz K."/>
            <person name="Weissman J.S."/>
            <person name="Sherlock G."/>
        </authorList>
    </citation>
    <scope>NUCLEOTIDE SEQUENCE [LARGE SCALE GENOMIC DNA]</scope>
    <scope>GENOME REANNOTATION</scope>
    <source>
        <strain>SC5314 / ATCC MYA-2876</strain>
    </source>
</reference>
<reference key="4">
    <citation type="journal article" date="2003" name="J. Biol. Chem.">
        <title>Inactivation of Kex2p diminishes the virulence of Candida albicans.</title>
        <authorList>
            <person name="Newport G."/>
            <person name="Kuo A."/>
            <person name="Flattery A."/>
            <person name="Gill C."/>
            <person name="Blake J.J."/>
            <person name="Kurtz M.B."/>
            <person name="Abruzzo G.K."/>
            <person name="Agabian N."/>
        </authorList>
    </citation>
    <scope>PREDICTION AS A SUBSTRATE FOR KEX2 CLEAVAGE</scope>
</reference>
<reference key="5">
    <citation type="journal article" date="2003" name="Yeast">
        <title>Genome-wide identification of fungal GPI proteins.</title>
        <authorList>
            <person name="De Groot P.W."/>
            <person name="Hellingwerf K.J."/>
            <person name="Klis F.M."/>
        </authorList>
    </citation>
    <scope>PREDICTION OF GPI-ANCHOR</scope>
</reference>
<reference key="6">
    <citation type="journal article" date="2006" name="Fungal Genet. Biol.">
        <title>Genomic response programs of Candida albicans following protoplasting and regeneration.</title>
        <authorList>
            <person name="Castillo L."/>
            <person name="Martinez A.I."/>
            <person name="Garcera A."/>
            <person name="Garcia-Martinez J."/>
            <person name="Ruiz-Herrera J."/>
            <person name="Valentin E."/>
            <person name="Sentandreu R."/>
        </authorList>
    </citation>
    <scope>INDUCTION</scope>
</reference>
<reference key="7">
    <citation type="journal article" date="2009" name="Proteomics">
        <title>Analysis of Candida albicans plasma membrane proteome.</title>
        <authorList>
            <person name="Cabezon V."/>
            <person name="Llama-Palacios A."/>
            <person name="Nombela C."/>
            <person name="Monteoliva L."/>
            <person name="Gil C."/>
        </authorList>
    </citation>
    <scope>IDENTIFICATION BY MASS SPECTROMETRY</scope>
    <scope>SUBCELLULAR LOCATION</scope>
</reference>
<reference key="8">
    <citation type="journal article" date="2011" name="J. Biol. Chem.">
        <title>Cap2-HAP complex is a critical transcriptional regulator that has dual but contrasting roles in regulation of iron homeostasis in Candida albicans.</title>
        <authorList>
            <person name="Singh R.P."/>
            <person name="Prasad H.K."/>
            <person name="Sinha I."/>
            <person name="Agarwal N."/>
            <person name="Natarajan K."/>
        </authorList>
    </citation>
    <scope>INDUCTION</scope>
</reference>
<reference key="9">
    <citation type="journal article" date="2011" name="PLoS ONE">
        <title>Characterizing the role of cell-wall beta-1,3-exoglucanase Xog1p in Candida albicans adhesion by the human antimicrobial peptide LL-37.</title>
        <authorList>
            <person name="Tsai P.W."/>
            <person name="Yang C.Y."/>
            <person name="Chang H.T."/>
            <person name="Lan C.Y."/>
        </authorList>
    </citation>
    <scope>FUNCTION</scope>
</reference>
<reference key="10">
    <citation type="journal article" date="2013" name="Mol. Microbiol.">
        <title>A family of secreted pathogenesis-related proteins in Candida albicans.</title>
        <authorList>
            <person name="Rohm M."/>
            <person name="Lindemann E."/>
            <person name="Hiller E."/>
            <person name="Ermert D."/>
            <person name="Lemuth K."/>
            <person name="Trkulja D."/>
            <person name="Sogukpinar O."/>
            <person name="Brunner H."/>
            <person name="Rupp S."/>
            <person name="Urban C.F."/>
            <person name="Sohn K."/>
        </authorList>
    </citation>
    <scope>IDENTIFICATION BY MASS SPECTROMETRY</scope>
    <scope>SUBCELLULAR LOCATION</scope>
</reference>
<proteinExistence type="evidence at protein level"/>
<organism>
    <name type="scientific">Candida albicans (strain SC5314 / ATCC MYA-2876)</name>
    <name type="common">Yeast</name>
    <dbReference type="NCBI Taxonomy" id="237561"/>
    <lineage>
        <taxon>Eukaryota</taxon>
        <taxon>Fungi</taxon>
        <taxon>Dikarya</taxon>
        <taxon>Ascomycota</taxon>
        <taxon>Saccharomycotina</taxon>
        <taxon>Pichiomycetes</taxon>
        <taxon>Debaryomycetaceae</taxon>
        <taxon>Candida/Lodderomyces clade</taxon>
        <taxon>Candida</taxon>
    </lineage>
</organism>
<gene>
    <name type="primary">EXG2</name>
    <name type="ordered locus">CAALFM_C102630CA</name>
    <name type="ORF">CaO19.10469</name>
    <name type="ORF">CaO19.2952</name>
</gene>
<accession>Q5AIA1</accession>
<accession>A0A1D8PCS8</accession>
<dbReference type="EC" id="3.2.1.58"/>
<dbReference type="EMBL" id="CP017623">
    <property type="protein sequence ID" value="AOW25944.1"/>
    <property type="molecule type" value="Genomic_DNA"/>
</dbReference>
<dbReference type="RefSeq" id="XP_721451.2">
    <property type="nucleotide sequence ID" value="XM_716358.2"/>
</dbReference>
<dbReference type="SMR" id="Q5AIA1"/>
<dbReference type="STRING" id="237561.Q5AIA1"/>
<dbReference type="GlyCosmos" id="Q5AIA1">
    <property type="glycosylation" value="11 sites, No reported glycans"/>
</dbReference>
<dbReference type="EnsemblFungi" id="C1_02630C_A-T">
    <property type="protein sequence ID" value="C1_02630C_A-T-p1"/>
    <property type="gene ID" value="C1_02630C_A"/>
</dbReference>
<dbReference type="GeneID" id="3636816"/>
<dbReference type="KEGG" id="cal:CAALFM_C102630CA"/>
<dbReference type="CGD" id="CAL0000181572">
    <property type="gene designation" value="EXG2"/>
</dbReference>
<dbReference type="VEuPathDB" id="FungiDB:C1_02630C_A"/>
<dbReference type="eggNOG" id="ENOG502QPYU">
    <property type="taxonomic scope" value="Eukaryota"/>
</dbReference>
<dbReference type="HOGENOM" id="CLU_004624_0_1_1"/>
<dbReference type="InParanoid" id="Q5AIA1"/>
<dbReference type="OMA" id="GWDMQDL"/>
<dbReference type="OrthoDB" id="62120at2759"/>
<dbReference type="PRO" id="PR:Q5AIA1"/>
<dbReference type="Proteomes" id="UP000000559">
    <property type="component" value="Chromosome 1"/>
</dbReference>
<dbReference type="GO" id="GO:0005576">
    <property type="term" value="C:extracellular region"/>
    <property type="evidence" value="ECO:0000318"/>
    <property type="project" value="GO_Central"/>
</dbReference>
<dbReference type="GO" id="GO:0005886">
    <property type="term" value="C:plasma membrane"/>
    <property type="evidence" value="ECO:0000314"/>
    <property type="project" value="CGD"/>
</dbReference>
<dbReference type="GO" id="GO:0098552">
    <property type="term" value="C:side of membrane"/>
    <property type="evidence" value="ECO:0007669"/>
    <property type="project" value="UniProtKB-KW"/>
</dbReference>
<dbReference type="GO" id="GO:0004338">
    <property type="term" value="F:glucan exo-1,3-beta-glucosidase activity"/>
    <property type="evidence" value="ECO:0000318"/>
    <property type="project" value="GO_Central"/>
</dbReference>
<dbReference type="GO" id="GO:0071555">
    <property type="term" value="P:cell wall organization"/>
    <property type="evidence" value="ECO:0007669"/>
    <property type="project" value="UniProtKB-KW"/>
</dbReference>
<dbReference type="GO" id="GO:0009251">
    <property type="term" value="P:glucan catabolic process"/>
    <property type="evidence" value="ECO:0000318"/>
    <property type="project" value="GO_Central"/>
</dbReference>
<dbReference type="FunFam" id="3.20.20.80:FF:000140">
    <property type="entry name" value="Glucan 1,3-beta-glucosidase 2"/>
    <property type="match status" value="1"/>
</dbReference>
<dbReference type="Gene3D" id="3.20.20.80">
    <property type="entry name" value="Glycosidases"/>
    <property type="match status" value="1"/>
</dbReference>
<dbReference type="InterPro" id="IPR001547">
    <property type="entry name" value="Glyco_hydro_5"/>
</dbReference>
<dbReference type="InterPro" id="IPR018087">
    <property type="entry name" value="Glyco_hydro_5_CS"/>
</dbReference>
<dbReference type="InterPro" id="IPR017853">
    <property type="entry name" value="Glycoside_hydrolase_SF"/>
</dbReference>
<dbReference type="InterPro" id="IPR050386">
    <property type="entry name" value="Glycosyl_hydrolase_5"/>
</dbReference>
<dbReference type="PANTHER" id="PTHR31297:SF1">
    <property type="entry name" value="GLUCAN 1,3-BETA-GLUCOSIDASE I_II-RELATED"/>
    <property type="match status" value="1"/>
</dbReference>
<dbReference type="PANTHER" id="PTHR31297">
    <property type="entry name" value="GLUCAN ENDO-1,6-BETA-GLUCOSIDASE B"/>
    <property type="match status" value="1"/>
</dbReference>
<dbReference type="Pfam" id="PF00150">
    <property type="entry name" value="Cellulase"/>
    <property type="match status" value="1"/>
</dbReference>
<dbReference type="SUPFAM" id="SSF51445">
    <property type="entry name" value="(Trans)glycosidases"/>
    <property type="match status" value="1"/>
</dbReference>
<dbReference type="PROSITE" id="PS00659">
    <property type="entry name" value="GLYCOSYL_HYDROL_F5"/>
    <property type="match status" value="1"/>
</dbReference>
<keyword id="KW-1003">Cell membrane</keyword>
<keyword id="KW-0961">Cell wall biogenesis/degradation</keyword>
<keyword id="KW-0325">Glycoprotein</keyword>
<keyword id="KW-0326">Glycosidase</keyword>
<keyword id="KW-0336">GPI-anchor</keyword>
<keyword id="KW-0378">Hydrolase</keyword>
<keyword id="KW-0449">Lipoprotein</keyword>
<keyword id="KW-0472">Membrane</keyword>
<keyword id="KW-1185">Reference proteome</keyword>
<keyword id="KW-0964">Secreted</keyword>
<keyword id="KW-0732">Signal</keyword>
<comment type="function">
    <text evidence="5">Beta-glucanases participate in the metabolism of beta-glucan, the main structural component of the cell wall. EXG2 is not heavily involved in the exoglucanase function of the adhesion process.</text>
</comment>
<comment type="catalytic activity">
    <reaction>
        <text>Successive hydrolysis of beta-D-glucose units from the non-reducing ends of (1-&gt;3)-beta-D-glucans, releasing alpha-glucose.</text>
        <dbReference type="EC" id="3.2.1.58"/>
    </reaction>
</comment>
<comment type="subcellular location">
    <subcellularLocation>
        <location>Cell membrane</location>
        <topology>Lipid-anchor</topology>
        <topology>GPI-anchor</topology>
    </subcellularLocation>
    <subcellularLocation>
        <location>Secreted</location>
    </subcellularLocation>
</comment>
<comment type="induction">
    <text evidence="3 4">Induced during cell wall regeneration and repressed by HAP43.</text>
</comment>
<comment type="PTM">
    <text>Predicted to be a substrate for cleavage by KEX2.</text>
</comment>
<comment type="similarity">
    <text evidence="6">Belongs to the glycosyl hydrolase 5 (cellulase A) family.</text>
</comment>
<evidence type="ECO:0000250" key="1"/>
<evidence type="ECO:0000255" key="2"/>
<evidence type="ECO:0000269" key="3">
    <source>
    </source>
</evidence>
<evidence type="ECO:0000269" key="4">
    <source>
    </source>
</evidence>
<evidence type="ECO:0000269" key="5">
    <source>
    </source>
</evidence>
<evidence type="ECO:0000305" key="6"/>
<protein>
    <recommendedName>
        <fullName>Glucan 1,3-beta-glucosidase 2</fullName>
        <ecNumber>3.2.1.58</ecNumber>
    </recommendedName>
    <alternativeName>
        <fullName>Exo-1,3-beta-glucanase 2</fullName>
    </alternativeName>
</protein>